<keyword id="KW-0004">4Fe-4S</keyword>
<keyword id="KW-0963">Cytoplasm</keyword>
<keyword id="KW-0408">Iron</keyword>
<keyword id="KW-0411">Iron-sulfur</keyword>
<keyword id="KW-0479">Metal-binding</keyword>
<keyword id="KW-0949">S-adenosyl-L-methionine</keyword>
<keyword id="KW-0808">Transferase</keyword>
<keyword id="KW-0819">tRNA processing</keyword>
<sequence>MKFYIRTFGCQMNINESEIMAGLLKEEGFEWTENPKEADIILINSCAVREKAENKMYGAIGGYGKLKDENKNLILGVGGCSAEKERENLLERFKNIDFVFGTRNVVDIGNLVKRALNGKRFADFSDKLNDVNYDIPKMPISKHHAWITIIYGCNKYCSYCIVPYTRGFEKSRPMEDIIREVESYAKKGYKEITFLGQNVDSYGKDFGDKKSKLDLLIQKAAEFDSIKRIWFLTSYPSDITDSLIQTVANEEKAANYFHLPAQSGSNKILKAMNRKYTREEFIELVNKVKKEVANVTVSSDFITGFPSETDEDFEETVDLIKQCRFERINIAEYSPREGTIAYKYQNDDVPKHIKNKRLQYLMELQKRINLEENEKYLEQEVVIIQEGKAGKNGTYMGRTMNNKLIIFESNEELNGEFLKVKVNKITPGPLYGEVVNNLY</sequence>
<accession>A9BGV7</accession>
<gene>
    <name evidence="1" type="primary">miaB</name>
    <name type="ordered locus">Pmob_1849</name>
</gene>
<organism>
    <name type="scientific">Petrotoga mobilis (strain DSM 10674 / SJ95)</name>
    <dbReference type="NCBI Taxonomy" id="403833"/>
    <lineage>
        <taxon>Bacteria</taxon>
        <taxon>Thermotogati</taxon>
        <taxon>Thermotogota</taxon>
        <taxon>Thermotogae</taxon>
        <taxon>Petrotogales</taxon>
        <taxon>Petrotogaceae</taxon>
        <taxon>Petrotoga</taxon>
    </lineage>
</organism>
<name>MIAB_PETMO</name>
<protein>
    <recommendedName>
        <fullName evidence="1">tRNA-2-methylthio-N(6)-dimethylallyladenosine synthase</fullName>
        <ecNumber evidence="1">2.8.4.3</ecNumber>
    </recommendedName>
    <alternativeName>
        <fullName evidence="1">(Dimethylallyl)adenosine tRNA methylthiotransferase MiaB</fullName>
    </alternativeName>
    <alternativeName>
        <fullName evidence="1">tRNA-i(6)A37 methylthiotransferase</fullName>
    </alternativeName>
</protein>
<dbReference type="EC" id="2.8.4.3" evidence="1"/>
<dbReference type="EMBL" id="CP000879">
    <property type="protein sequence ID" value="ABX32538.1"/>
    <property type="molecule type" value="Genomic_DNA"/>
</dbReference>
<dbReference type="RefSeq" id="WP_012209635.1">
    <property type="nucleotide sequence ID" value="NC_010003.1"/>
</dbReference>
<dbReference type="SMR" id="A9BGV7"/>
<dbReference type="STRING" id="403833.Pmob_1849"/>
<dbReference type="KEGG" id="pmo:Pmob_1849"/>
<dbReference type="eggNOG" id="COG0621">
    <property type="taxonomic scope" value="Bacteria"/>
</dbReference>
<dbReference type="HOGENOM" id="CLU_018697_2_0_0"/>
<dbReference type="OrthoDB" id="9805215at2"/>
<dbReference type="Proteomes" id="UP000000789">
    <property type="component" value="Chromosome"/>
</dbReference>
<dbReference type="GO" id="GO:0005829">
    <property type="term" value="C:cytosol"/>
    <property type="evidence" value="ECO:0007669"/>
    <property type="project" value="TreeGrafter"/>
</dbReference>
<dbReference type="GO" id="GO:0051539">
    <property type="term" value="F:4 iron, 4 sulfur cluster binding"/>
    <property type="evidence" value="ECO:0007669"/>
    <property type="project" value="UniProtKB-UniRule"/>
</dbReference>
<dbReference type="GO" id="GO:0046872">
    <property type="term" value="F:metal ion binding"/>
    <property type="evidence" value="ECO:0007669"/>
    <property type="project" value="UniProtKB-KW"/>
</dbReference>
<dbReference type="GO" id="GO:0035597">
    <property type="term" value="F:N6-isopentenyladenosine methylthiotransferase activity"/>
    <property type="evidence" value="ECO:0007669"/>
    <property type="project" value="TreeGrafter"/>
</dbReference>
<dbReference type="CDD" id="cd01335">
    <property type="entry name" value="Radical_SAM"/>
    <property type="match status" value="1"/>
</dbReference>
<dbReference type="FunFam" id="3.40.50.12160:FF:000003">
    <property type="entry name" value="CDK5 regulatory subunit-associated protein 1"/>
    <property type="match status" value="1"/>
</dbReference>
<dbReference type="FunFam" id="3.80.30.20:FF:000001">
    <property type="entry name" value="tRNA-2-methylthio-N(6)-dimethylallyladenosine synthase 2"/>
    <property type="match status" value="1"/>
</dbReference>
<dbReference type="Gene3D" id="3.40.50.12160">
    <property type="entry name" value="Methylthiotransferase, N-terminal domain"/>
    <property type="match status" value="1"/>
</dbReference>
<dbReference type="Gene3D" id="3.80.30.20">
    <property type="entry name" value="tm_1862 like domain"/>
    <property type="match status" value="1"/>
</dbReference>
<dbReference type="HAMAP" id="MF_01864">
    <property type="entry name" value="tRNA_metthiotr_MiaB"/>
    <property type="match status" value="1"/>
</dbReference>
<dbReference type="InterPro" id="IPR006638">
    <property type="entry name" value="Elp3/MiaA/NifB-like_rSAM"/>
</dbReference>
<dbReference type="InterPro" id="IPR005839">
    <property type="entry name" value="Methylthiotransferase"/>
</dbReference>
<dbReference type="InterPro" id="IPR020612">
    <property type="entry name" value="Methylthiotransferase_CS"/>
</dbReference>
<dbReference type="InterPro" id="IPR013848">
    <property type="entry name" value="Methylthiotransferase_N"/>
</dbReference>
<dbReference type="InterPro" id="IPR038135">
    <property type="entry name" value="Methylthiotransferase_N_sf"/>
</dbReference>
<dbReference type="InterPro" id="IPR006463">
    <property type="entry name" value="MiaB_methiolase"/>
</dbReference>
<dbReference type="InterPro" id="IPR007197">
    <property type="entry name" value="rSAM"/>
</dbReference>
<dbReference type="InterPro" id="IPR023404">
    <property type="entry name" value="rSAM_horseshoe"/>
</dbReference>
<dbReference type="InterPro" id="IPR002792">
    <property type="entry name" value="TRAM_dom"/>
</dbReference>
<dbReference type="NCBIfam" id="TIGR01574">
    <property type="entry name" value="miaB-methiolase"/>
    <property type="match status" value="1"/>
</dbReference>
<dbReference type="NCBIfam" id="TIGR00089">
    <property type="entry name" value="MiaB/RimO family radical SAM methylthiotransferase"/>
    <property type="match status" value="1"/>
</dbReference>
<dbReference type="PANTHER" id="PTHR43020">
    <property type="entry name" value="CDK5 REGULATORY SUBUNIT-ASSOCIATED PROTEIN 1"/>
    <property type="match status" value="1"/>
</dbReference>
<dbReference type="PANTHER" id="PTHR43020:SF2">
    <property type="entry name" value="MITOCHONDRIAL TRNA METHYLTHIOTRANSFERASE CDK5RAP1"/>
    <property type="match status" value="1"/>
</dbReference>
<dbReference type="Pfam" id="PF04055">
    <property type="entry name" value="Radical_SAM"/>
    <property type="match status" value="1"/>
</dbReference>
<dbReference type="Pfam" id="PF01938">
    <property type="entry name" value="TRAM"/>
    <property type="match status" value="1"/>
</dbReference>
<dbReference type="Pfam" id="PF00919">
    <property type="entry name" value="UPF0004"/>
    <property type="match status" value="1"/>
</dbReference>
<dbReference type="SFLD" id="SFLDF00273">
    <property type="entry name" value="(dimethylallyl)adenosine_tRNA"/>
    <property type="match status" value="1"/>
</dbReference>
<dbReference type="SFLD" id="SFLDG01082">
    <property type="entry name" value="B12-binding_domain_containing"/>
    <property type="match status" value="1"/>
</dbReference>
<dbReference type="SFLD" id="SFLDG01061">
    <property type="entry name" value="methylthiotransferase"/>
    <property type="match status" value="1"/>
</dbReference>
<dbReference type="SMART" id="SM00729">
    <property type="entry name" value="Elp3"/>
    <property type="match status" value="1"/>
</dbReference>
<dbReference type="SUPFAM" id="SSF102114">
    <property type="entry name" value="Radical SAM enzymes"/>
    <property type="match status" value="1"/>
</dbReference>
<dbReference type="PROSITE" id="PS51449">
    <property type="entry name" value="MTTASE_N"/>
    <property type="match status" value="1"/>
</dbReference>
<dbReference type="PROSITE" id="PS01278">
    <property type="entry name" value="MTTASE_RADICAL"/>
    <property type="match status" value="1"/>
</dbReference>
<dbReference type="PROSITE" id="PS51918">
    <property type="entry name" value="RADICAL_SAM"/>
    <property type="match status" value="1"/>
</dbReference>
<dbReference type="PROSITE" id="PS50926">
    <property type="entry name" value="TRAM"/>
    <property type="match status" value="1"/>
</dbReference>
<proteinExistence type="inferred from homology"/>
<comment type="function">
    <text evidence="1">Catalyzes the methylthiolation of N6-(dimethylallyl)adenosine (i(6)A), leading to the formation of 2-methylthio-N6-(dimethylallyl)adenosine (ms(2)i(6)A) at position 37 in tRNAs that read codons beginning with uridine.</text>
</comment>
<comment type="catalytic activity">
    <reaction evidence="1">
        <text>N(6)-dimethylallyladenosine(37) in tRNA + (sulfur carrier)-SH + AH2 + 2 S-adenosyl-L-methionine = 2-methylsulfanyl-N(6)-dimethylallyladenosine(37) in tRNA + (sulfur carrier)-H + 5'-deoxyadenosine + L-methionine + A + S-adenosyl-L-homocysteine + 2 H(+)</text>
        <dbReference type="Rhea" id="RHEA:37067"/>
        <dbReference type="Rhea" id="RHEA-COMP:10375"/>
        <dbReference type="Rhea" id="RHEA-COMP:10376"/>
        <dbReference type="Rhea" id="RHEA-COMP:14737"/>
        <dbReference type="Rhea" id="RHEA-COMP:14739"/>
        <dbReference type="ChEBI" id="CHEBI:13193"/>
        <dbReference type="ChEBI" id="CHEBI:15378"/>
        <dbReference type="ChEBI" id="CHEBI:17319"/>
        <dbReference type="ChEBI" id="CHEBI:17499"/>
        <dbReference type="ChEBI" id="CHEBI:29917"/>
        <dbReference type="ChEBI" id="CHEBI:57844"/>
        <dbReference type="ChEBI" id="CHEBI:57856"/>
        <dbReference type="ChEBI" id="CHEBI:59789"/>
        <dbReference type="ChEBI" id="CHEBI:64428"/>
        <dbReference type="ChEBI" id="CHEBI:74415"/>
        <dbReference type="ChEBI" id="CHEBI:74417"/>
        <dbReference type="EC" id="2.8.4.3"/>
    </reaction>
</comment>
<comment type="cofactor">
    <cofactor evidence="1">
        <name>[4Fe-4S] cluster</name>
        <dbReference type="ChEBI" id="CHEBI:49883"/>
    </cofactor>
    <text evidence="1">Binds 2 [4Fe-4S] clusters. One cluster is coordinated with 3 cysteines and an exchangeable S-adenosyl-L-methionine.</text>
</comment>
<comment type="subunit">
    <text evidence="1">Monomer.</text>
</comment>
<comment type="subcellular location">
    <subcellularLocation>
        <location evidence="1">Cytoplasm</location>
    </subcellularLocation>
</comment>
<comment type="similarity">
    <text evidence="1">Belongs to the methylthiotransferase family. MiaB subfamily.</text>
</comment>
<reference key="1">
    <citation type="submission" date="2007-11" db="EMBL/GenBank/DDBJ databases">
        <title>Complete sequence of Petroga mobilis SJ95.</title>
        <authorList>
            <consortium name="US DOE Joint Genome Institute"/>
            <person name="Copeland A."/>
            <person name="Lucas S."/>
            <person name="Lapidus A."/>
            <person name="Barry K."/>
            <person name="Glavina del Rio T."/>
            <person name="Dalin E."/>
            <person name="Tice H."/>
            <person name="Pitluck S."/>
            <person name="Meincke L."/>
            <person name="Brettin T."/>
            <person name="Bruce D."/>
            <person name="Detter J.C."/>
            <person name="Han C."/>
            <person name="Kuske C.R."/>
            <person name="Schmutz J."/>
            <person name="Larimer F."/>
            <person name="Land M."/>
            <person name="Hauser L."/>
            <person name="Kyrpides N."/>
            <person name="Mikhailova N."/>
            <person name="Noll K."/>
            <person name="Richardson P."/>
        </authorList>
    </citation>
    <scope>NUCLEOTIDE SEQUENCE [LARGE SCALE GENOMIC DNA]</scope>
    <source>
        <strain>DSM 10674 / SJ95</strain>
    </source>
</reference>
<feature type="chain" id="PRO_0000374433" description="tRNA-2-methylthio-N(6)-dimethylallyladenosine synthase">
    <location>
        <begin position="1"/>
        <end position="439"/>
    </location>
</feature>
<feature type="domain" description="MTTase N-terminal" evidence="1">
    <location>
        <begin position="1"/>
        <end position="117"/>
    </location>
</feature>
<feature type="domain" description="Radical SAM core" evidence="2">
    <location>
        <begin position="139"/>
        <end position="371"/>
    </location>
</feature>
<feature type="domain" description="TRAM" evidence="1">
    <location>
        <begin position="369"/>
        <end position="436"/>
    </location>
</feature>
<feature type="binding site" evidence="1">
    <location>
        <position position="10"/>
    </location>
    <ligand>
        <name>[4Fe-4S] cluster</name>
        <dbReference type="ChEBI" id="CHEBI:49883"/>
        <label>1</label>
    </ligand>
</feature>
<feature type="binding site" evidence="1">
    <location>
        <position position="46"/>
    </location>
    <ligand>
        <name>[4Fe-4S] cluster</name>
        <dbReference type="ChEBI" id="CHEBI:49883"/>
        <label>1</label>
    </ligand>
</feature>
<feature type="binding site" evidence="1">
    <location>
        <position position="80"/>
    </location>
    <ligand>
        <name>[4Fe-4S] cluster</name>
        <dbReference type="ChEBI" id="CHEBI:49883"/>
        <label>1</label>
    </ligand>
</feature>
<feature type="binding site" evidence="1">
    <location>
        <position position="153"/>
    </location>
    <ligand>
        <name>[4Fe-4S] cluster</name>
        <dbReference type="ChEBI" id="CHEBI:49883"/>
        <label>2</label>
        <note>4Fe-4S-S-AdoMet</note>
    </ligand>
</feature>
<feature type="binding site" evidence="1">
    <location>
        <position position="157"/>
    </location>
    <ligand>
        <name>[4Fe-4S] cluster</name>
        <dbReference type="ChEBI" id="CHEBI:49883"/>
        <label>2</label>
        <note>4Fe-4S-S-AdoMet</note>
    </ligand>
</feature>
<feature type="binding site" evidence="1">
    <location>
        <position position="160"/>
    </location>
    <ligand>
        <name>[4Fe-4S] cluster</name>
        <dbReference type="ChEBI" id="CHEBI:49883"/>
        <label>2</label>
        <note>4Fe-4S-S-AdoMet</note>
    </ligand>
</feature>
<evidence type="ECO:0000255" key="1">
    <source>
        <dbReference type="HAMAP-Rule" id="MF_01864"/>
    </source>
</evidence>
<evidence type="ECO:0000255" key="2">
    <source>
        <dbReference type="PROSITE-ProRule" id="PRU01266"/>
    </source>
</evidence>